<accession>P19258</accession>
<sequence length="176" mass="19686">MALWRAYQRALAAHPWKVQVLTAGSLMGVGDMISQQLVERRGLQQHQAGRTLTMVSLGCGFVGPVVGGWYKVLDHLIPGTTKVHALKKMLLDQGGFAPCFLGCFLPLVGILNGMSAQDNWAKLKRDYPDALITNYYLWPAVQLANFYLVPLHYRLAVVQCVAIVWNSYLSWKAHQF</sequence>
<name>MPV17_MOUSE</name>
<feature type="chain" id="PRO_0000218928" description="Mitochondrial inner membrane protein Mpv17">
    <location>
        <begin position="1"/>
        <end position="176"/>
    </location>
</feature>
<feature type="transmembrane region" description="Helical" evidence="2">
    <location>
        <begin position="18"/>
        <end position="38"/>
    </location>
</feature>
<feature type="transmembrane region" description="Helical" evidence="2">
    <location>
        <begin position="53"/>
        <end position="73"/>
    </location>
</feature>
<feature type="transmembrane region" description="Helical" evidence="2">
    <location>
        <begin position="94"/>
        <end position="114"/>
    </location>
</feature>
<feature type="transmembrane region" description="Helical" evidence="2">
    <location>
        <begin position="131"/>
        <end position="151"/>
    </location>
</feature>
<feature type="site" description="Determines ion selectivity" evidence="1">
    <location>
        <position position="92"/>
    </location>
</feature>
<organism evidence="9">
    <name type="scientific">Mus musculus</name>
    <name type="common">Mouse</name>
    <dbReference type="NCBI Taxonomy" id="10090"/>
    <lineage>
        <taxon>Eukaryota</taxon>
        <taxon>Metazoa</taxon>
        <taxon>Chordata</taxon>
        <taxon>Craniata</taxon>
        <taxon>Vertebrata</taxon>
        <taxon>Euteleostomi</taxon>
        <taxon>Mammalia</taxon>
        <taxon>Eutheria</taxon>
        <taxon>Euarchontoglires</taxon>
        <taxon>Glires</taxon>
        <taxon>Rodentia</taxon>
        <taxon>Myomorpha</taxon>
        <taxon>Muroidea</taxon>
        <taxon>Muridae</taxon>
        <taxon>Murinae</taxon>
        <taxon>Mus</taxon>
        <taxon>Mus</taxon>
    </lineage>
</organism>
<gene>
    <name evidence="8" type="primary">Mpv17</name>
</gene>
<protein>
    <recommendedName>
        <fullName evidence="8">Mitochondrial inner membrane protein Mpv17</fullName>
    </recommendedName>
    <alternativeName>
        <fullName>Protein Mpv17</fullName>
        <shortName>Mpv-17</shortName>
    </alternativeName>
</protein>
<reference key="1">
    <citation type="journal article" date="1990" name="Cell">
        <title>Transgenic mouse model of kidney disease: insertional inactivation of ubiquitously expressed gene leads to nephrotic syndrome.</title>
        <authorList>
            <person name="Weiher H."/>
            <person name="Noda T."/>
            <person name="Gray D.A."/>
            <person name="Sharpe A.H."/>
            <person name="Jaenisch R."/>
        </authorList>
    </citation>
    <scope>NUCLEOTIDE SEQUENCE [MRNA]</scope>
</reference>
<reference key="2">
    <citation type="journal article" date="2004" name="Genome Res.">
        <title>The status, quality, and expansion of the NIH full-length cDNA project: the Mammalian Gene Collection (MGC).</title>
        <authorList>
            <consortium name="The MGC Project Team"/>
        </authorList>
    </citation>
    <scope>NUCLEOTIDE SEQUENCE [LARGE SCALE MRNA]</scope>
    <source>
        <strain>FVB/N</strain>
        <tissue>Kidney</tissue>
    </source>
</reference>
<reference key="3">
    <citation type="journal article" date="1994" name="EMBO J.">
        <title>The glomerulosclerosis gene Mpv17 encodes a peroxisomal protein producing reactive oxygen species.</title>
        <authorList>
            <person name="Zwacka R.M."/>
            <person name="Reuter A."/>
            <person name="Pfaff E."/>
            <person name="Moll J."/>
            <person name="Gorgas K."/>
            <person name="Karasawa M."/>
            <person name="Weiher H."/>
        </authorList>
    </citation>
    <scope>PRELIMINARY SUBCELLULAR LOCATION</scope>
    <scope>FUNCTION</scope>
</reference>
<reference key="4">
    <citation type="journal article" date="1997" name="Hear. Res.">
        <title>Loss of auditory function in transgenic Mpv17-deficient mice.</title>
        <authorList>
            <person name="Muller M."/>
            <person name="Smolders J.W.T."/>
            <person name="Meyer zum Gottesberge A.M."/>
            <person name="Reuter A."/>
            <person name="Zwacka R.M."/>
            <person name="Weiher H."/>
            <person name="Klinke R."/>
        </authorList>
    </citation>
    <scope>DISRUPTION PHENOTYPE</scope>
</reference>
<reference key="5">
    <citation type="journal article" date="2001" name="Hear. Res.">
        <title>Ultrastructural and physiological defects in the cochlea of the Mpv17 mouse strain. A comparison between young and old adult animals.</title>
        <authorList>
            <person name="Meyer zum Gottesberge A.M."/>
            <person name="Felix H."/>
            <person name="Reuter A."/>
            <person name="Weiher H."/>
        </authorList>
    </citation>
    <scope>DISRUPTION PHENOTYPE</scope>
</reference>
<reference key="6">
    <citation type="journal article" date="2010" name="Cell">
        <title>A tissue-specific atlas of mouse protein phosphorylation and expression.</title>
        <authorList>
            <person name="Huttlin E.L."/>
            <person name="Jedrychowski M.P."/>
            <person name="Elias J.E."/>
            <person name="Goswami T."/>
            <person name="Rad R."/>
            <person name="Beausoleil S.A."/>
            <person name="Villen J."/>
            <person name="Haas W."/>
            <person name="Sowa M.E."/>
            <person name="Gygi S.P."/>
        </authorList>
    </citation>
    <scope>IDENTIFICATION BY MASS SPECTROMETRY [LARGE SCALE ANALYSIS]</scope>
    <source>
        <tissue>Brown adipose tissue</tissue>
        <tissue>Heart</tissue>
        <tissue>Kidney</tissue>
        <tissue>Liver</tissue>
        <tissue>Lung</tissue>
        <tissue>Pancreas</tissue>
        <tissue>Testis</tissue>
    </source>
</reference>
<reference key="7">
    <citation type="journal article" date="2016" name="PLoS Genet.">
        <title>MPV17 loss causes deoxynucleotide insufficiency and slow DNA replication in mitochondria.</title>
        <authorList>
            <person name="Dalla Rosa I."/>
            <person name="Camara Y."/>
            <person name="Durigon R."/>
            <person name="Moss C.F."/>
            <person name="Vidoni S."/>
            <person name="Akman G."/>
            <person name="Hunt L."/>
            <person name="Johnson M.A."/>
            <person name="Grocott S."/>
            <person name="Wang L."/>
            <person name="Thorburn D.R."/>
            <person name="Hirano M."/>
            <person name="Poulton J."/>
            <person name="Taylor R.W."/>
            <person name="Elgar G."/>
            <person name="Marti R."/>
            <person name="Voshol P."/>
            <person name="Holt I.J."/>
            <person name="Spinazzola A."/>
        </authorList>
    </citation>
    <scope>FUNCTION</scope>
</reference>
<keyword id="KW-0209">Deafness</keyword>
<keyword id="KW-0472">Membrane</keyword>
<keyword id="KW-0496">Mitochondrion</keyword>
<keyword id="KW-0999">Mitochondrion inner membrane</keyword>
<keyword id="KW-1185">Reference proteome</keyword>
<keyword id="KW-0812">Transmembrane</keyword>
<keyword id="KW-1133">Transmembrane helix</keyword>
<comment type="function">
    <text evidence="1 4 7">Non-selective channel that modulates the membrane potential under normal conditions and oxidative stress, and is involved in mitochondrial homeostasis (By similarity). Involved in mitochondrial deoxynucleoside triphosphates (dNTP) pool homeostasis and mitochondrial DNA (mtDNA) maintenance (PubMed:26760297). May be involved in the regulation of reactive oxygen species metabolism and the control of oxidative phosphorylation (Probable).</text>
</comment>
<comment type="subcellular location">
    <subcellularLocation>
        <location evidence="1">Mitochondrion inner membrane</location>
        <topology evidence="1">Multi-pass membrane protein</topology>
    </subcellularLocation>
</comment>
<comment type="tissue specificity">
    <text>High levels in heart, kidney, and brain, intermediate levels in testis, and low levels in liver and spleen.</text>
</comment>
<comment type="disruption phenotype">
    <text evidence="3 5">Mice lack expression of this protein resulting in the development of adult onset nephrotic syndrome and chronic renal failure. They also develop severe morphological degeneration of the inner ear. In the inner ear, mice lacking Mpv17 display degenerative changes of the cochlear structures already at the age of 2 months. The degenerative changes are patchy arranged throughout the entire length of the cochlea and involved the organ of Corti as well as the stria vascularis epithelia with alterations of the basement membrane of the capillaries.</text>
</comment>
<comment type="similarity">
    <text evidence="6">Belongs to the peroxisomal membrane protein PXMP2/4 family.</text>
</comment>
<comment type="caution">
    <text evidence="7">Was initially thought to be a peroxisomal protein (PubMed:7957077). However, it was later shown in human that it is a mitochondrial protein (PubMed:16582907, PubMed:16582910).</text>
</comment>
<evidence type="ECO:0000250" key="1">
    <source>
        <dbReference type="UniProtKB" id="P39210"/>
    </source>
</evidence>
<evidence type="ECO:0000255" key="2"/>
<evidence type="ECO:0000269" key="3">
    <source>
    </source>
</evidence>
<evidence type="ECO:0000269" key="4">
    <source>
    </source>
</evidence>
<evidence type="ECO:0000269" key="5">
    <source>
    </source>
</evidence>
<evidence type="ECO:0000305" key="6"/>
<evidence type="ECO:0000305" key="7">
    <source>
    </source>
</evidence>
<evidence type="ECO:0000312" key="8">
    <source>
        <dbReference type="MGI" id="MGI:97138"/>
    </source>
</evidence>
<evidence type="ECO:0000312" key="9">
    <source>
        <dbReference type="Proteomes" id="UP000000589"/>
    </source>
</evidence>
<proteinExistence type="evidence at protein level"/>
<dbReference type="EMBL" id="M36411">
    <property type="protein sequence ID" value="AAA39736.1"/>
    <property type="molecule type" value="mRNA"/>
</dbReference>
<dbReference type="EMBL" id="BC013452">
    <property type="protein sequence ID" value="AAH13452.1"/>
    <property type="molecule type" value="mRNA"/>
</dbReference>
<dbReference type="CCDS" id="CCDS19175.1"/>
<dbReference type="PIR" id="S29031">
    <property type="entry name" value="S29031"/>
</dbReference>
<dbReference type="RefSeq" id="NP_001281253.1">
    <property type="nucleotide sequence ID" value="NM_001294324.1"/>
</dbReference>
<dbReference type="RefSeq" id="NP_001297456.1">
    <property type="nucleotide sequence ID" value="NM_001310527.1"/>
</dbReference>
<dbReference type="RefSeq" id="NP_032648.1">
    <property type="nucleotide sequence ID" value="NM_008622.6"/>
</dbReference>
<dbReference type="FunCoup" id="P19258">
    <property type="interactions" value="1677"/>
</dbReference>
<dbReference type="STRING" id="10090.ENSMUSP00000144119"/>
<dbReference type="TCDB" id="1.A.126.1.5">
    <property type="family name" value="the mpv17/pmp22 4 tms putative channel (mpv17) family"/>
</dbReference>
<dbReference type="PhosphoSitePlus" id="P19258"/>
<dbReference type="jPOST" id="P19258"/>
<dbReference type="PaxDb" id="10090-ENSMUSP00000115292"/>
<dbReference type="ProteomicsDB" id="291502"/>
<dbReference type="Pumba" id="P19258"/>
<dbReference type="Antibodypedia" id="28381">
    <property type="antibodies" value="177 antibodies from 27 providers"/>
</dbReference>
<dbReference type="DNASU" id="17527"/>
<dbReference type="Ensembl" id="ENSMUST00000154241.8">
    <property type="protein sequence ID" value="ENSMUSP00000115292.2"/>
    <property type="gene ID" value="ENSMUSG00000107283.4"/>
</dbReference>
<dbReference type="Ensembl" id="ENSMUST00000200864.4">
    <property type="protein sequence ID" value="ENSMUSP00000144331.2"/>
    <property type="gene ID" value="ENSMUSG00000107283.4"/>
</dbReference>
<dbReference type="Ensembl" id="ENSMUST00000201353.4">
    <property type="protein sequence ID" value="ENSMUSP00000144198.2"/>
    <property type="gene ID" value="ENSMUSG00000107283.4"/>
</dbReference>
<dbReference type="GeneID" id="17527"/>
<dbReference type="KEGG" id="mmu:17527"/>
<dbReference type="UCSC" id="uc008wxf.3">
    <property type="organism name" value="mouse"/>
</dbReference>
<dbReference type="AGR" id="MGI:97138"/>
<dbReference type="CTD" id="4358"/>
<dbReference type="MGI" id="MGI:97138">
    <property type="gene designation" value="Mpv17"/>
</dbReference>
<dbReference type="VEuPathDB" id="HostDB:ENSMUSG00000107283"/>
<dbReference type="eggNOG" id="KOG1944">
    <property type="taxonomic scope" value="Eukaryota"/>
</dbReference>
<dbReference type="GeneTree" id="ENSGT00940000160891"/>
<dbReference type="InParanoid" id="P19258"/>
<dbReference type="OMA" id="WYQSKLA"/>
<dbReference type="OrthoDB" id="430207at2759"/>
<dbReference type="TreeFam" id="TF324070"/>
<dbReference type="Reactome" id="R-MMU-9033241">
    <property type="pathway name" value="Peroxisomal protein import"/>
</dbReference>
<dbReference type="BioGRID-ORCS" id="17527">
    <property type="hits" value="1 hit in 45 CRISPR screens"/>
</dbReference>
<dbReference type="ChiTaRS" id="Mpv17">
    <property type="organism name" value="mouse"/>
</dbReference>
<dbReference type="PRO" id="PR:P19258"/>
<dbReference type="Proteomes" id="UP000000589">
    <property type="component" value="Chromosome 5"/>
</dbReference>
<dbReference type="RNAct" id="P19258">
    <property type="molecule type" value="protein"/>
</dbReference>
<dbReference type="Bgee" id="ENSMUSG00000107283">
    <property type="expression patterns" value="Expressed in right kidney and 256 other cell types or tissues"/>
</dbReference>
<dbReference type="ExpressionAtlas" id="P19258">
    <property type="expression patterns" value="baseline and differential"/>
</dbReference>
<dbReference type="GO" id="GO:0005743">
    <property type="term" value="C:mitochondrial inner membrane"/>
    <property type="evidence" value="ECO:0007669"/>
    <property type="project" value="UniProtKB-SubCell"/>
</dbReference>
<dbReference type="GO" id="GO:0005739">
    <property type="term" value="C:mitochondrion"/>
    <property type="evidence" value="ECO:0000315"/>
    <property type="project" value="MGI"/>
</dbReference>
<dbReference type="GO" id="GO:0005777">
    <property type="term" value="C:peroxisome"/>
    <property type="evidence" value="ECO:0000314"/>
    <property type="project" value="MGI"/>
</dbReference>
<dbReference type="GO" id="GO:0015267">
    <property type="term" value="F:channel activity"/>
    <property type="evidence" value="ECO:0000250"/>
    <property type="project" value="UniProtKB"/>
</dbReference>
<dbReference type="GO" id="GO:0034614">
    <property type="term" value="P:cellular response to reactive oxygen species"/>
    <property type="evidence" value="ECO:0000315"/>
    <property type="project" value="UniProtKB"/>
</dbReference>
<dbReference type="GO" id="GO:0032836">
    <property type="term" value="P:glomerular basement membrane development"/>
    <property type="evidence" value="ECO:0000315"/>
    <property type="project" value="UniProtKB"/>
</dbReference>
<dbReference type="GO" id="GO:0048839">
    <property type="term" value="P:inner ear development"/>
    <property type="evidence" value="ECO:0000315"/>
    <property type="project" value="UniProtKB"/>
</dbReference>
<dbReference type="GO" id="GO:0072593">
    <property type="term" value="P:reactive oxygen species metabolic process"/>
    <property type="evidence" value="ECO:0000314"/>
    <property type="project" value="MGI"/>
</dbReference>
<dbReference type="GO" id="GO:1901858">
    <property type="term" value="P:regulation of mitochondrial DNA metabolic process"/>
    <property type="evidence" value="ECO:0000315"/>
    <property type="project" value="UniProtKB"/>
</dbReference>
<dbReference type="GO" id="GO:2000377">
    <property type="term" value="P:regulation of reactive oxygen species metabolic process"/>
    <property type="evidence" value="ECO:0000315"/>
    <property type="project" value="UniProtKB"/>
</dbReference>
<dbReference type="InterPro" id="IPR007248">
    <property type="entry name" value="Mpv17_PMP22"/>
</dbReference>
<dbReference type="PANTHER" id="PTHR11266">
    <property type="entry name" value="PEROXISOMAL MEMBRANE PROTEIN 2, PXMP2 MPV17"/>
    <property type="match status" value="1"/>
</dbReference>
<dbReference type="PANTHER" id="PTHR11266:SF17">
    <property type="entry name" value="PROTEIN MPV17"/>
    <property type="match status" value="1"/>
</dbReference>
<dbReference type="Pfam" id="PF04117">
    <property type="entry name" value="Mpv17_PMP22"/>
    <property type="match status" value="1"/>
</dbReference>